<reference key="1">
    <citation type="journal article" date="2006" name="Nature">
        <title>Insights from the genome of the biotrophic fungal plant pathogen Ustilago maydis.</title>
        <authorList>
            <person name="Kaemper J."/>
            <person name="Kahmann R."/>
            <person name="Boelker M."/>
            <person name="Ma L.-J."/>
            <person name="Brefort T."/>
            <person name="Saville B.J."/>
            <person name="Banuett F."/>
            <person name="Kronstad J.W."/>
            <person name="Gold S.E."/>
            <person name="Mueller O."/>
            <person name="Perlin M.H."/>
            <person name="Woesten H.A.B."/>
            <person name="de Vries R."/>
            <person name="Ruiz-Herrera J."/>
            <person name="Reynaga-Pena C.G."/>
            <person name="Snetselaar K."/>
            <person name="McCann M."/>
            <person name="Perez-Martin J."/>
            <person name="Feldbruegge M."/>
            <person name="Basse C.W."/>
            <person name="Steinberg G."/>
            <person name="Ibeas J.I."/>
            <person name="Holloman W."/>
            <person name="Guzman P."/>
            <person name="Farman M.L."/>
            <person name="Stajich J.E."/>
            <person name="Sentandreu R."/>
            <person name="Gonzalez-Prieto J.M."/>
            <person name="Kennell J.C."/>
            <person name="Molina L."/>
            <person name="Schirawski J."/>
            <person name="Mendoza-Mendoza A."/>
            <person name="Greilinger D."/>
            <person name="Muench K."/>
            <person name="Roessel N."/>
            <person name="Scherer M."/>
            <person name="Vranes M."/>
            <person name="Ladendorf O."/>
            <person name="Vincon V."/>
            <person name="Fuchs U."/>
            <person name="Sandrock B."/>
            <person name="Meng S."/>
            <person name="Ho E.C.H."/>
            <person name="Cahill M.J."/>
            <person name="Boyce K.J."/>
            <person name="Klose J."/>
            <person name="Klosterman S.J."/>
            <person name="Deelstra H.J."/>
            <person name="Ortiz-Castellanos L."/>
            <person name="Li W."/>
            <person name="Sanchez-Alonso P."/>
            <person name="Schreier P.H."/>
            <person name="Haeuser-Hahn I."/>
            <person name="Vaupel M."/>
            <person name="Koopmann E."/>
            <person name="Friedrich G."/>
            <person name="Voss H."/>
            <person name="Schlueter T."/>
            <person name="Margolis J."/>
            <person name="Platt D."/>
            <person name="Swimmer C."/>
            <person name="Gnirke A."/>
            <person name="Chen F."/>
            <person name="Vysotskaia V."/>
            <person name="Mannhaupt G."/>
            <person name="Gueldener U."/>
            <person name="Muensterkoetter M."/>
            <person name="Haase D."/>
            <person name="Oesterheld M."/>
            <person name="Mewes H.-W."/>
            <person name="Mauceli E.W."/>
            <person name="DeCaprio D."/>
            <person name="Wade C.M."/>
            <person name="Butler J."/>
            <person name="Young S.K."/>
            <person name="Jaffe D.B."/>
            <person name="Calvo S.E."/>
            <person name="Nusbaum C."/>
            <person name="Galagan J.E."/>
            <person name="Birren B.W."/>
        </authorList>
    </citation>
    <scope>NUCLEOTIDE SEQUENCE [LARGE SCALE GENOMIC DNA]</scope>
    <source>
        <strain>DSM 14603 / FGSC 9021 / UM521</strain>
    </source>
</reference>
<reference key="2">
    <citation type="submission" date="2014-09" db="EMBL/GenBank/DDBJ databases">
        <authorList>
            <person name="Gueldener U."/>
            <person name="Muensterkoetter M."/>
            <person name="Walter M.C."/>
            <person name="Mannhaupt G."/>
            <person name="Kahmann R."/>
        </authorList>
    </citation>
    <scope>GENOME REANNOTATION</scope>
    <source>
        <strain>DSM 14603 / FGSC 9021 / UM521</strain>
    </source>
</reference>
<reference key="3">
    <citation type="journal article" date="2011" name="Mol. Microbiol.">
        <title>Two linked genes encoding a secreted effector and a membrane protein are essential for Ustilago maydis-induced tumour formation.</title>
        <authorList>
            <person name="Doehlemann G."/>
            <person name="Reissmann S."/>
            <person name="Assmann D."/>
            <person name="Fleckenstein M."/>
            <person name="Kahmann R."/>
        </authorList>
    </citation>
    <scope>INDUCTION</scope>
    <scope>FUNCTION</scope>
    <scope>DISRUPTION PHENOTYPE</scope>
    <scope>SUBCELLULAR LOCATION</scope>
</reference>
<reference key="4">
    <citation type="journal article" date="2013" name="PLoS Pathog.">
        <title>Compatibility in the Ustilago maydis-maize interaction requires inhibition of host cysteine proteases by the fungal effector Pit2.</title>
        <authorList>
            <person name="Mueller A.N."/>
            <person name="Ziemann S."/>
            <person name="Treitschke S."/>
            <person name="Assmann D."/>
            <person name="Doehlemann G."/>
        </authorList>
    </citation>
    <scope>INTERACTION WITH HOST CP1A; CP1B; XCP2 AND CP2</scope>
    <scope>FUNCTION</scope>
    <scope>DOMAIN</scope>
    <scope>MUTAGENESIS OF 51-ARG--PHE-55</scope>
</reference>
<reference key="5">
    <citation type="journal article" date="2016" name="PLoS ONE">
        <title>Unfolded protein response (UPR) regulator Cib1 controls expression of genes encoding secreted virulence factors in Ustilago maydis.</title>
        <authorList>
            <person name="Hampel M."/>
            <person name="Jakobi M."/>
            <person name="Schmitz L."/>
            <person name="Meyer U."/>
            <person name="Finkernagel F."/>
            <person name="Doehlemann G."/>
            <person name="Heimel K."/>
        </authorList>
    </citation>
    <scope>INDUCTION</scope>
    <scope>SUBCELLULAR LOCATION</scope>
</reference>
<reference key="6">
    <citation type="journal article" date="2019" name="Nat. Commun.">
        <title>A fungal substrate mimicking molecule suppresses plant immunity via an inter-kingdom conserved motif.</title>
        <authorList>
            <person name="Misas Villamil J.C."/>
            <person name="Mueller A.N."/>
            <person name="Demir F."/>
            <person name="Meyer U."/>
            <person name="Oekmen B."/>
            <person name="Schulze Hueynck J."/>
            <person name="Breuer M."/>
            <person name="Dauben H."/>
            <person name="Win J."/>
            <person name="Huesgen P.F."/>
            <person name="Doehlemann G."/>
        </authorList>
    </citation>
    <scope>FUNCTION</scope>
    <scope>DOMAIN</scope>
    <scope>CLEAVAGE BY HOST CYSTEINE PROTEASES</scope>
    <scope>MUTAGENESIS OF ARG-50 AND TRP-51</scope>
</reference>
<sequence>MLFRSAFVLLIVAFASACLVQHVQAKQIPVRRSLSTDASMSSAAGKLNRRWWFGFTGSLGKEPDNGQVQIKIIPDALIIKNPPANKDDLNKLIENLKRKHPRFKTVVMPTDPNGDVVIWE</sequence>
<protein>
    <recommendedName>
        <fullName evidence="6">Secreted effector PIT2</fullName>
    </recommendedName>
    <alternativeName>
        <fullName evidence="7">Proteins important for tumors 2</fullName>
    </alternativeName>
</protein>
<proteinExistence type="evidence at protein level"/>
<accession>A0A0D1EAR7</accession>
<evidence type="ECO:0000255" key="1"/>
<evidence type="ECO:0000269" key="2">
    <source>
    </source>
</evidence>
<evidence type="ECO:0000269" key="3">
    <source>
    </source>
</evidence>
<evidence type="ECO:0000269" key="4">
    <source>
    </source>
</evidence>
<evidence type="ECO:0000269" key="5">
    <source>
    </source>
</evidence>
<evidence type="ECO:0000303" key="6">
    <source>
    </source>
</evidence>
<evidence type="ECO:0000303" key="7">
    <source>
    </source>
</evidence>
<feature type="signal peptide" evidence="1">
    <location>
        <begin position="1"/>
        <end position="25"/>
    </location>
</feature>
<feature type="chain" id="PRO_5002245312" description="Secreted effector PIT2">
    <location>
        <begin position="26"/>
        <end position="120"/>
    </location>
</feature>
<feature type="region of interest" description="PID14 protease inhibitor domain" evidence="3">
    <location>
        <begin position="46"/>
        <end position="59"/>
    </location>
</feature>
<feature type="mutagenesis site" description="Impairs the virulence; when associated with A-51." evidence="5">
    <original>R</original>
    <variation>A</variation>
    <location>
        <position position="50"/>
    </location>
</feature>
<feature type="mutagenesis site" description="Loses protease inhibition activity and impairs the formation of tumors in plant leaves." evidence="3">
    <original>WWFGF</original>
    <variation>GGAGG</variation>
    <location>
        <begin position="51"/>
        <end position="55"/>
    </location>
</feature>
<feature type="mutagenesis site" description="Impairs the virulence; when associated with A-50." evidence="5">
    <original>W</original>
    <variation>A</variation>
    <location>
        <position position="51"/>
    </location>
</feature>
<name>PIT2_MYCMD</name>
<dbReference type="EMBL" id="CM003141">
    <property type="protein sequence ID" value="KIS71480.1"/>
    <property type="molecule type" value="Genomic_DNA"/>
</dbReference>
<dbReference type="RefSeq" id="XP_011387264.1">
    <property type="nucleotide sequence ID" value="XM_011388962.1"/>
</dbReference>
<dbReference type="EnsemblFungi" id="KIS71480">
    <property type="protein sequence ID" value="KIS71480"/>
    <property type="gene ID" value="UMAG_01375"/>
</dbReference>
<dbReference type="GeneID" id="23562420"/>
<dbReference type="KEGG" id="uma:UMAG_01375"/>
<dbReference type="VEuPathDB" id="FungiDB:UMAG_01375"/>
<dbReference type="eggNOG" id="ENOG502TK2Y">
    <property type="taxonomic scope" value="Eukaryota"/>
</dbReference>
<dbReference type="InParanoid" id="A0A0D1EAR7"/>
<dbReference type="OrthoDB" id="2553950at2759"/>
<dbReference type="Proteomes" id="UP000000561">
    <property type="component" value="Chromosome 2"/>
</dbReference>
<dbReference type="GO" id="GO:0005576">
    <property type="term" value="C:extracellular region"/>
    <property type="evidence" value="ECO:0007669"/>
    <property type="project" value="UniProtKB-SubCell"/>
</dbReference>
<keyword id="KW-1185">Reference proteome</keyword>
<keyword id="KW-0964">Secreted</keyword>
<keyword id="KW-0732">Signal</keyword>
<comment type="function">
    <text evidence="2 3 5">Secreted effector required for virulence (PubMed:21692877, PubMed:23459172). Functions as an inhibitor of a set of apoplastic maize papain-like cysteine proteases (PLCPs) including CP1A, CP1B, XCP2 and CP2, whose activity is directly linked with salicylic-acid-associated plant defenses (PubMed:23459172). Acts as a substrate mimicking molecule for apoplastic PLCPs and its processing releases the embedded inhibitor peptide PID14, which in turn blocks PLCPs to modulate host immunity (PubMed:30952847).</text>
</comment>
<comment type="subunit">
    <text evidence="3">Interacts with host cysteine proteases CP1A, CP1B, XCP2 and CP2.</text>
</comment>
<comment type="subcellular location">
    <subcellularLocation>
        <location evidence="2 4">Secreted</location>
    </subcellularLocation>
    <text evidence="2">Secreted to the biotrophic interface.</text>
</comment>
<comment type="induction">
    <text evidence="2 4">Expression is highly up-regulated during all stages of pathogenic development (PubMed:21692877). Expression is positively regulated by the unfolded protein response (UPR) signaling via the binding of CIB1 to the UPRE motif localized at the PIT1/PIT2 promoter (PubMed:27093436).</text>
</comment>
<comment type="domain">
    <text evidence="3 5">The PID14 protease inhibitor domain is sufficient for inhibition of host cysteine proteases.</text>
</comment>
<comment type="PTM">
    <text evidence="5">Cleaved by host target papain-like cysteine proteases (PLCPs) to release the embedded inhibitor peptide PID14.</text>
</comment>
<comment type="disruption phenotype">
    <text evidence="2">Keeps the ability to penetrate maize epidermis and to grow intracellularly at sites of infection but fails to spread and induce tumors in infected leaves.</text>
</comment>
<organism>
    <name type="scientific">Mycosarcoma maydis</name>
    <name type="common">Corn smut fungus</name>
    <name type="synonym">Ustilago maydis</name>
    <dbReference type="NCBI Taxonomy" id="5270"/>
    <lineage>
        <taxon>Eukaryota</taxon>
        <taxon>Fungi</taxon>
        <taxon>Dikarya</taxon>
        <taxon>Basidiomycota</taxon>
        <taxon>Ustilaginomycotina</taxon>
        <taxon>Ustilaginomycetes</taxon>
        <taxon>Ustilaginales</taxon>
        <taxon>Ustilaginaceae</taxon>
        <taxon>Mycosarcoma</taxon>
    </lineage>
</organism>
<gene>
    <name evidence="7" type="primary">PIT2</name>
    <name type="ORF">UMAG_01375</name>
</gene>